<evidence type="ECO:0000255" key="1">
    <source>
        <dbReference type="PROSITE-ProRule" id="PRU00253"/>
    </source>
</evidence>
<evidence type="ECO:0000269" key="2">
    <source ref="3"/>
</evidence>
<evidence type="ECO:0000305" key="3"/>
<sequence length="318" mass="36099">MRFKGLDLNLLVALDALMTERKLTAAARSINLSQPAMSAAIGRLRAYFNDELFLMQQRRLVPTPRAEALAPAVREALLHIQLSVIAWDPLVPAESDRRFRIVLSDFMTLVFFEKVIKRVAREAPGVSFELLHVNDDPDERLRSGDLDFLILPDQFMSATHPSAKLFEDKLVCVGCPSNQQLRGKLSLKRFMSMGHVAAMFGRTLKPSIEQWLLLEHGFKRRVEIVVPGFNSIPMLLQGTNRIATLPLLLVRHFEPTIPLQIVDHPLPPLSFTEALQWPLLHNSDPGNIWMRNIILEEASRIETSSERCSQEPRATQSW</sequence>
<comment type="function">
    <text evidence="2">NodD regulates the expression of the nodABCFE genes which encode other nodulation proteins. NodD is also a negative regulator of its own expression. Binds flavonoids as inducers.</text>
</comment>
<comment type="similarity">
    <text evidence="3">Belongs to the LysR transcriptional regulatory family.</text>
</comment>
<comment type="sequence caution" evidence="3">
    <conflict type="frameshift" ref="2"/>
</comment>
<name>NODD_RHILT</name>
<protein>
    <recommendedName>
        <fullName>Nodulation protein D</fullName>
    </recommendedName>
</protein>
<gene>
    <name type="primary">nodD</name>
</gene>
<feature type="chain" id="PRO_0000105716" description="Nodulation protein D">
    <location>
        <begin position="1"/>
        <end position="318"/>
    </location>
</feature>
<feature type="domain" description="HTH lysR-type" evidence="1">
    <location>
        <begin position="6"/>
        <end position="63"/>
    </location>
</feature>
<feature type="DNA-binding region" description="H-T-H motif" evidence="1">
    <location>
        <begin position="23"/>
        <end position="42"/>
    </location>
</feature>
<organism>
    <name type="scientific">Rhizobium leguminosarum bv. trifolii</name>
    <dbReference type="NCBI Taxonomy" id="386"/>
    <lineage>
        <taxon>Bacteria</taxon>
        <taxon>Pseudomonadati</taxon>
        <taxon>Pseudomonadota</taxon>
        <taxon>Alphaproteobacteria</taxon>
        <taxon>Hyphomicrobiales</taxon>
        <taxon>Rhizobiaceae</taxon>
        <taxon>Rhizobium/Agrobacterium group</taxon>
        <taxon>Rhizobium</taxon>
    </lineage>
</organism>
<keyword id="KW-0010">Activator</keyword>
<keyword id="KW-0238">DNA-binding</keyword>
<keyword id="KW-0536">Nodulation</keyword>
<keyword id="KW-0614">Plasmid</keyword>
<keyword id="KW-0678">Repressor</keyword>
<keyword id="KW-0804">Transcription</keyword>
<keyword id="KW-0805">Transcription regulation</keyword>
<reference key="1">
    <citation type="journal article" date="1986" name="Nucleic Acids Res.">
        <title>DNA sequence of Rhizobium trifolii nodulation genes reveals a reiterated and potentially regulatory sequence preceding nodABC and nodFE.</title>
        <authorList>
            <person name="Schofield P.R."/>
            <person name="Watson J.M."/>
        </authorList>
    </citation>
    <scope>NUCLEOTIDE SEQUENCE [GENOMIC DNA]</scope>
    <source>
        <strain>ANU 843</strain>
    </source>
</reference>
<reference key="2">
    <citation type="journal article" date="1983" name="Mol. Gen. Genet.">
        <title>A molecular linkage map of nitrogenase and nodulation genes in Rhizobium trifolii.</title>
        <authorList>
            <person name="Schofield P.R."/>
            <person name="Djordjevic M.A."/>
            <person name="Rolfe B.G."/>
            <person name="Shine J."/>
            <person name="Watson J.M."/>
        </authorList>
    </citation>
    <scope>NUCLEOTIDE SEQUENCE [GENOMIC DNA] OF 207-223</scope>
    <source>
        <strain>ANU 843</strain>
    </source>
</reference>
<reference key="3">
    <citation type="journal article" date="1989" name="Plant Mol. Biol.">
        <title>Localization of functional regions of the Rhizobium nodD product using hybrid nodD genes.</title>
        <authorList>
            <person name="Spaink H.P."/>
            <person name="Wijffelman C.A."/>
            <person name="Okker R.J.H."/>
            <person name="Lugtenberg B.E.J."/>
        </authorList>
    </citation>
    <scope>FUNCTIONAL REGIONS</scope>
</reference>
<geneLocation type="plasmid">
    <name>sym pRtr843e</name>
</geneLocation>
<proteinExistence type="inferred from homology"/>
<accession>P04680</accession>
<dbReference type="EMBL" id="X03721">
    <property type="protein sequence ID" value="CAA27354.1"/>
    <property type="molecule type" value="Genomic_DNA"/>
</dbReference>
<dbReference type="PIR" id="D23766">
    <property type="entry name" value="D23766"/>
</dbReference>
<dbReference type="SMR" id="P04680"/>
<dbReference type="GO" id="GO:0003677">
    <property type="term" value="F:DNA binding"/>
    <property type="evidence" value="ECO:0007669"/>
    <property type="project" value="UniProtKB-KW"/>
</dbReference>
<dbReference type="GO" id="GO:0003700">
    <property type="term" value="F:DNA-binding transcription factor activity"/>
    <property type="evidence" value="ECO:0007669"/>
    <property type="project" value="InterPro"/>
</dbReference>
<dbReference type="CDD" id="cd08462">
    <property type="entry name" value="PBP2_NodD"/>
    <property type="match status" value="1"/>
</dbReference>
<dbReference type="Gene3D" id="3.40.190.10">
    <property type="entry name" value="Periplasmic binding protein-like II"/>
    <property type="match status" value="2"/>
</dbReference>
<dbReference type="Gene3D" id="1.10.10.10">
    <property type="entry name" value="Winged helix-like DNA-binding domain superfamily/Winged helix DNA-binding domain"/>
    <property type="match status" value="1"/>
</dbReference>
<dbReference type="InterPro" id="IPR050389">
    <property type="entry name" value="LysR-type_TF"/>
</dbReference>
<dbReference type="InterPro" id="IPR005119">
    <property type="entry name" value="LysR_subst-bd"/>
</dbReference>
<dbReference type="InterPro" id="IPR037416">
    <property type="entry name" value="NodD_PBP2"/>
</dbReference>
<dbReference type="InterPro" id="IPR000847">
    <property type="entry name" value="Tscrpt_reg_HTH_LysR"/>
</dbReference>
<dbReference type="InterPro" id="IPR036388">
    <property type="entry name" value="WH-like_DNA-bd_sf"/>
</dbReference>
<dbReference type="InterPro" id="IPR036390">
    <property type="entry name" value="WH_DNA-bd_sf"/>
</dbReference>
<dbReference type="PANTHER" id="PTHR30118:SF6">
    <property type="entry name" value="HTH-TYPE TRANSCRIPTIONAL REGULATOR LEUO"/>
    <property type="match status" value="1"/>
</dbReference>
<dbReference type="PANTHER" id="PTHR30118">
    <property type="entry name" value="HTH-TYPE TRANSCRIPTIONAL REGULATOR LEUO-RELATED"/>
    <property type="match status" value="1"/>
</dbReference>
<dbReference type="Pfam" id="PF00126">
    <property type="entry name" value="HTH_1"/>
    <property type="match status" value="1"/>
</dbReference>
<dbReference type="Pfam" id="PF03466">
    <property type="entry name" value="LysR_substrate"/>
    <property type="match status" value="1"/>
</dbReference>
<dbReference type="PRINTS" id="PR00039">
    <property type="entry name" value="HTHLYSR"/>
</dbReference>
<dbReference type="SUPFAM" id="SSF53850">
    <property type="entry name" value="Periplasmic binding protein-like II"/>
    <property type="match status" value="1"/>
</dbReference>
<dbReference type="SUPFAM" id="SSF46785">
    <property type="entry name" value="Winged helix' DNA-binding domain"/>
    <property type="match status" value="1"/>
</dbReference>
<dbReference type="PROSITE" id="PS50931">
    <property type="entry name" value="HTH_LYSR"/>
    <property type="match status" value="1"/>
</dbReference>